<protein>
    <recommendedName>
        <fullName evidence="1">Shikimate dehydrogenase (NADP(+))</fullName>
        <shortName evidence="1">SDH</shortName>
        <ecNumber evidence="1">1.1.1.25</ecNumber>
    </recommendedName>
</protein>
<gene>
    <name evidence="1" type="primary">aroE</name>
    <name type="ordered locus">Acry_2761</name>
</gene>
<comment type="function">
    <text evidence="1">Involved in the biosynthesis of the chorismate, which leads to the biosynthesis of aromatic amino acids. Catalyzes the reversible NADPH linked reduction of 3-dehydroshikimate (DHSA) to yield shikimate (SA).</text>
</comment>
<comment type="catalytic activity">
    <reaction evidence="1">
        <text>shikimate + NADP(+) = 3-dehydroshikimate + NADPH + H(+)</text>
        <dbReference type="Rhea" id="RHEA:17737"/>
        <dbReference type="ChEBI" id="CHEBI:15378"/>
        <dbReference type="ChEBI" id="CHEBI:16630"/>
        <dbReference type="ChEBI" id="CHEBI:36208"/>
        <dbReference type="ChEBI" id="CHEBI:57783"/>
        <dbReference type="ChEBI" id="CHEBI:58349"/>
        <dbReference type="EC" id="1.1.1.25"/>
    </reaction>
</comment>
<comment type="pathway">
    <text evidence="1">Metabolic intermediate biosynthesis; chorismate biosynthesis; chorismate from D-erythrose 4-phosphate and phosphoenolpyruvate: step 4/7.</text>
</comment>
<comment type="subunit">
    <text evidence="1">Homodimer.</text>
</comment>
<comment type="similarity">
    <text evidence="1">Belongs to the shikimate dehydrogenase family.</text>
</comment>
<keyword id="KW-0028">Amino-acid biosynthesis</keyword>
<keyword id="KW-0057">Aromatic amino acid biosynthesis</keyword>
<keyword id="KW-0521">NADP</keyword>
<keyword id="KW-0560">Oxidoreductase</keyword>
<keyword id="KW-1185">Reference proteome</keyword>
<organism>
    <name type="scientific">Acidiphilium cryptum (strain JF-5)</name>
    <dbReference type="NCBI Taxonomy" id="349163"/>
    <lineage>
        <taxon>Bacteria</taxon>
        <taxon>Pseudomonadati</taxon>
        <taxon>Pseudomonadota</taxon>
        <taxon>Alphaproteobacteria</taxon>
        <taxon>Acetobacterales</taxon>
        <taxon>Acidocellaceae</taxon>
        <taxon>Acidiphilium</taxon>
    </lineage>
</organism>
<accession>A5G270</accession>
<dbReference type="EC" id="1.1.1.25" evidence="1"/>
<dbReference type="EMBL" id="CP000697">
    <property type="protein sequence ID" value="ABQ31952.1"/>
    <property type="molecule type" value="Genomic_DNA"/>
</dbReference>
<dbReference type="RefSeq" id="WP_012040292.1">
    <property type="nucleotide sequence ID" value="NC_009484.1"/>
</dbReference>
<dbReference type="SMR" id="A5G270"/>
<dbReference type="STRING" id="349163.Acry_2761"/>
<dbReference type="KEGG" id="acr:Acry_2761"/>
<dbReference type="eggNOG" id="COG0169">
    <property type="taxonomic scope" value="Bacteria"/>
</dbReference>
<dbReference type="HOGENOM" id="CLU_044063_2_0_5"/>
<dbReference type="UniPathway" id="UPA00053">
    <property type="reaction ID" value="UER00087"/>
</dbReference>
<dbReference type="Proteomes" id="UP000000245">
    <property type="component" value="Chromosome"/>
</dbReference>
<dbReference type="GO" id="GO:0005829">
    <property type="term" value="C:cytosol"/>
    <property type="evidence" value="ECO:0007669"/>
    <property type="project" value="TreeGrafter"/>
</dbReference>
<dbReference type="GO" id="GO:0050661">
    <property type="term" value="F:NADP binding"/>
    <property type="evidence" value="ECO:0007669"/>
    <property type="project" value="InterPro"/>
</dbReference>
<dbReference type="GO" id="GO:0004764">
    <property type="term" value="F:shikimate 3-dehydrogenase (NADP+) activity"/>
    <property type="evidence" value="ECO:0007669"/>
    <property type="project" value="UniProtKB-UniRule"/>
</dbReference>
<dbReference type="GO" id="GO:0008652">
    <property type="term" value="P:amino acid biosynthetic process"/>
    <property type="evidence" value="ECO:0007669"/>
    <property type="project" value="UniProtKB-KW"/>
</dbReference>
<dbReference type="GO" id="GO:0009073">
    <property type="term" value="P:aromatic amino acid family biosynthetic process"/>
    <property type="evidence" value="ECO:0007669"/>
    <property type="project" value="UniProtKB-KW"/>
</dbReference>
<dbReference type="GO" id="GO:0009423">
    <property type="term" value="P:chorismate biosynthetic process"/>
    <property type="evidence" value="ECO:0007669"/>
    <property type="project" value="UniProtKB-UniRule"/>
</dbReference>
<dbReference type="GO" id="GO:0019632">
    <property type="term" value="P:shikimate metabolic process"/>
    <property type="evidence" value="ECO:0007669"/>
    <property type="project" value="InterPro"/>
</dbReference>
<dbReference type="CDD" id="cd01065">
    <property type="entry name" value="NAD_bind_Shikimate_DH"/>
    <property type="match status" value="1"/>
</dbReference>
<dbReference type="Gene3D" id="3.40.50.10860">
    <property type="entry name" value="Leucine Dehydrogenase, chain A, domain 1"/>
    <property type="match status" value="1"/>
</dbReference>
<dbReference type="Gene3D" id="3.40.50.720">
    <property type="entry name" value="NAD(P)-binding Rossmann-like Domain"/>
    <property type="match status" value="1"/>
</dbReference>
<dbReference type="HAMAP" id="MF_00222">
    <property type="entry name" value="Shikimate_DH_AroE"/>
    <property type="match status" value="1"/>
</dbReference>
<dbReference type="InterPro" id="IPR046346">
    <property type="entry name" value="Aminoacid_DH-like_N_sf"/>
</dbReference>
<dbReference type="InterPro" id="IPR036291">
    <property type="entry name" value="NAD(P)-bd_dom_sf"/>
</dbReference>
<dbReference type="InterPro" id="IPR011342">
    <property type="entry name" value="Shikimate_DH"/>
</dbReference>
<dbReference type="InterPro" id="IPR013708">
    <property type="entry name" value="Shikimate_DH-bd_N"/>
</dbReference>
<dbReference type="InterPro" id="IPR022893">
    <property type="entry name" value="Shikimate_DH_fam"/>
</dbReference>
<dbReference type="InterPro" id="IPR006151">
    <property type="entry name" value="Shikm_DH/Glu-tRNA_Rdtase"/>
</dbReference>
<dbReference type="NCBIfam" id="TIGR00507">
    <property type="entry name" value="aroE"/>
    <property type="match status" value="1"/>
</dbReference>
<dbReference type="NCBIfam" id="NF001312">
    <property type="entry name" value="PRK00258.1-4"/>
    <property type="match status" value="1"/>
</dbReference>
<dbReference type="PANTHER" id="PTHR21089:SF1">
    <property type="entry name" value="BIFUNCTIONAL 3-DEHYDROQUINATE DEHYDRATASE_SHIKIMATE DEHYDROGENASE, CHLOROPLASTIC"/>
    <property type="match status" value="1"/>
</dbReference>
<dbReference type="PANTHER" id="PTHR21089">
    <property type="entry name" value="SHIKIMATE DEHYDROGENASE"/>
    <property type="match status" value="1"/>
</dbReference>
<dbReference type="Pfam" id="PF01488">
    <property type="entry name" value="Shikimate_DH"/>
    <property type="match status" value="1"/>
</dbReference>
<dbReference type="Pfam" id="PF08501">
    <property type="entry name" value="Shikimate_dh_N"/>
    <property type="match status" value="1"/>
</dbReference>
<dbReference type="SUPFAM" id="SSF53223">
    <property type="entry name" value="Aminoacid dehydrogenase-like, N-terminal domain"/>
    <property type="match status" value="1"/>
</dbReference>
<dbReference type="SUPFAM" id="SSF51735">
    <property type="entry name" value="NAD(P)-binding Rossmann-fold domains"/>
    <property type="match status" value="1"/>
</dbReference>
<reference key="1">
    <citation type="submission" date="2007-05" db="EMBL/GenBank/DDBJ databases">
        <title>Complete sequence of chromosome of Acidiphilium cryptum JF-5.</title>
        <authorList>
            <consortium name="US DOE Joint Genome Institute"/>
            <person name="Copeland A."/>
            <person name="Lucas S."/>
            <person name="Lapidus A."/>
            <person name="Barry K."/>
            <person name="Detter J.C."/>
            <person name="Glavina del Rio T."/>
            <person name="Hammon N."/>
            <person name="Israni S."/>
            <person name="Dalin E."/>
            <person name="Tice H."/>
            <person name="Pitluck S."/>
            <person name="Sims D."/>
            <person name="Brettin T."/>
            <person name="Bruce D."/>
            <person name="Han C."/>
            <person name="Schmutz J."/>
            <person name="Larimer F."/>
            <person name="Land M."/>
            <person name="Hauser L."/>
            <person name="Kyrpides N."/>
            <person name="Kim E."/>
            <person name="Magnuson T."/>
            <person name="Richardson P."/>
        </authorList>
    </citation>
    <scope>NUCLEOTIDE SEQUENCE [LARGE SCALE GENOMIC DNA]</scope>
    <source>
        <strain>JF-5</strain>
    </source>
</reference>
<evidence type="ECO:0000255" key="1">
    <source>
        <dbReference type="HAMAP-Rule" id="MF_00222"/>
    </source>
</evidence>
<feature type="chain" id="PRO_1000021252" description="Shikimate dehydrogenase (NADP(+))">
    <location>
        <begin position="1"/>
        <end position="276"/>
    </location>
</feature>
<feature type="active site" description="Proton acceptor" evidence="1">
    <location>
        <position position="71"/>
    </location>
</feature>
<feature type="binding site" evidence="1">
    <location>
        <begin position="20"/>
        <end position="22"/>
    </location>
    <ligand>
        <name>shikimate</name>
        <dbReference type="ChEBI" id="CHEBI:36208"/>
    </ligand>
</feature>
<feature type="binding site" evidence="1">
    <location>
        <position position="67"/>
    </location>
    <ligand>
        <name>shikimate</name>
        <dbReference type="ChEBI" id="CHEBI:36208"/>
    </ligand>
</feature>
<feature type="binding site" evidence="1">
    <location>
        <position position="83"/>
    </location>
    <ligand>
        <name>NADP(+)</name>
        <dbReference type="ChEBI" id="CHEBI:58349"/>
    </ligand>
</feature>
<feature type="binding site" evidence="1">
    <location>
        <position position="92"/>
    </location>
    <ligand>
        <name>shikimate</name>
        <dbReference type="ChEBI" id="CHEBI:36208"/>
    </ligand>
</feature>
<feature type="binding site" evidence="1">
    <location>
        <position position="107"/>
    </location>
    <ligand>
        <name>shikimate</name>
        <dbReference type="ChEBI" id="CHEBI:36208"/>
    </ligand>
</feature>
<feature type="binding site" evidence="1">
    <location>
        <begin position="131"/>
        <end position="135"/>
    </location>
    <ligand>
        <name>NADP(+)</name>
        <dbReference type="ChEBI" id="CHEBI:58349"/>
    </ligand>
</feature>
<feature type="binding site" evidence="1">
    <location>
        <position position="217"/>
    </location>
    <ligand>
        <name>NADP(+)</name>
        <dbReference type="ChEBI" id="CHEBI:58349"/>
    </ligand>
</feature>
<feature type="binding site" evidence="1">
    <location>
        <position position="219"/>
    </location>
    <ligand>
        <name>shikimate</name>
        <dbReference type="ChEBI" id="CHEBI:36208"/>
    </ligand>
</feature>
<feature type="binding site" evidence="1">
    <location>
        <position position="240"/>
    </location>
    <ligand>
        <name>NADP(+)</name>
        <dbReference type="ChEBI" id="CHEBI:58349"/>
    </ligand>
</feature>
<sequence>MILSGHARLAGVIGYPVAHSRSPRLHGTWLERHGIDGAYLPLAIAPDDFAACVAALAKMGFAGANVTIPHKEAAFAVCDRVADSARRAGAVNTLVFTPTGIEGANTDGSGFLANLRAHGVNPAAGPALVLGAGGAARAIATALQDAGAVVTLCNRSPERAVALARDFGLVHIPWEARSAALADHALVVNTTSLGMAGHNPLELDLARAAPGMAVADIVYVPLETPLLAAARARGLVAVEGLGMLLHQAVPGFAAWFGVTPVVDDALYRAVAADLMG</sequence>
<name>AROE_ACICJ</name>
<proteinExistence type="inferred from homology"/>